<sequence length="302" mass="33466">MTSGYYTVSFFYAILLLCACTRAEIYLTGGESQGLPSGFWQMDDDLAIAPVSMVEFYQTIGLTANGTVPESFNKRDATEYPNIISNITTQAANFTQHSLVEQLQNDVTAISISNAINVAVDGSVETPADLQYNRNQETGESTLCRAKFYGVEVRTWSRLYNRAVSSTTLTTNLNSYIAQWVAWAVHGSGDKKFCGSQEFTNIFFDGQEGWSLFVKTWSTNSSCDITASEGNLTCAVRVSVSSMHNHGKTAFCVTYSHGDSWRAELRVVANDAWSHYYPWSIDCPEVDKNNMAINDCFDQAQG</sequence>
<comment type="similarity">
    <text evidence="2">To yeast killer toxin KHR.</text>
</comment>
<evidence type="ECO:0000255" key="1"/>
<evidence type="ECO:0000305" key="2"/>
<feature type="signal peptide" evidence="1">
    <location>
        <begin position="1"/>
        <end position="23"/>
    </location>
</feature>
<feature type="chain" id="PRO_0000014316" description="Putative uncharacterized protein YER076C">
    <location>
        <begin position="24"/>
        <end position="302"/>
    </location>
</feature>
<feature type="glycosylation site" description="N-linked (GlcNAc...) asparagine" evidence="1">
    <location>
        <position position="65"/>
    </location>
</feature>
<feature type="glycosylation site" description="N-linked (GlcNAc...) asparagine" evidence="1">
    <location>
        <position position="86"/>
    </location>
</feature>
<feature type="glycosylation site" description="N-linked (GlcNAc...) asparagine" evidence="1">
    <location>
        <position position="93"/>
    </location>
</feature>
<feature type="glycosylation site" description="N-linked (GlcNAc...) asparagine" evidence="1">
    <location>
        <position position="220"/>
    </location>
</feature>
<feature type="glycosylation site" description="N-linked (GlcNAc...) asparagine" evidence="1">
    <location>
        <position position="231"/>
    </location>
</feature>
<organism>
    <name type="scientific">Saccharomyces cerevisiae (strain ATCC 204508 / S288c)</name>
    <name type="common">Baker's yeast</name>
    <dbReference type="NCBI Taxonomy" id="559292"/>
    <lineage>
        <taxon>Eukaryota</taxon>
        <taxon>Fungi</taxon>
        <taxon>Dikarya</taxon>
        <taxon>Ascomycota</taxon>
        <taxon>Saccharomycotina</taxon>
        <taxon>Saccharomycetes</taxon>
        <taxon>Saccharomycetales</taxon>
        <taxon>Saccharomycetaceae</taxon>
        <taxon>Saccharomyces</taxon>
    </lineage>
</organism>
<protein>
    <recommendedName>
        <fullName>Putative uncharacterized protein YER076C</fullName>
    </recommendedName>
</protein>
<name>YEQ6_YEAST</name>
<accession>P40049</accession>
<accession>D3DLY2</accession>
<gene>
    <name type="ordered locus">YER076C</name>
</gene>
<keyword id="KW-0325">Glycoprotein</keyword>
<keyword id="KW-1185">Reference proteome</keyword>
<keyword id="KW-0732">Signal</keyword>
<reference key="1">
    <citation type="journal article" date="1997" name="Nature">
        <title>The nucleotide sequence of Saccharomyces cerevisiae chromosome V.</title>
        <authorList>
            <person name="Dietrich F.S."/>
            <person name="Mulligan J.T."/>
            <person name="Hennessy K.M."/>
            <person name="Yelton M.A."/>
            <person name="Allen E."/>
            <person name="Araujo R."/>
            <person name="Aviles E."/>
            <person name="Berno A."/>
            <person name="Brennan T."/>
            <person name="Carpenter J."/>
            <person name="Chen E."/>
            <person name="Cherry J.M."/>
            <person name="Chung E."/>
            <person name="Duncan M."/>
            <person name="Guzman E."/>
            <person name="Hartzell G."/>
            <person name="Hunicke-Smith S."/>
            <person name="Hyman R.W."/>
            <person name="Kayser A."/>
            <person name="Komp C."/>
            <person name="Lashkari D."/>
            <person name="Lew H."/>
            <person name="Lin D."/>
            <person name="Mosedale D."/>
            <person name="Nakahara K."/>
            <person name="Namath A."/>
            <person name="Norgren R."/>
            <person name="Oefner P."/>
            <person name="Oh C."/>
            <person name="Petel F.X."/>
            <person name="Roberts D."/>
            <person name="Sehl P."/>
            <person name="Schramm S."/>
            <person name="Shogren T."/>
            <person name="Smith V."/>
            <person name="Taylor P."/>
            <person name="Wei Y."/>
            <person name="Botstein D."/>
            <person name="Davis R.W."/>
        </authorList>
    </citation>
    <scope>NUCLEOTIDE SEQUENCE [LARGE SCALE GENOMIC DNA]</scope>
    <source>
        <strain>ATCC 204508 / S288c</strain>
    </source>
</reference>
<reference key="2">
    <citation type="journal article" date="2014" name="G3 (Bethesda)">
        <title>The reference genome sequence of Saccharomyces cerevisiae: Then and now.</title>
        <authorList>
            <person name="Engel S.R."/>
            <person name="Dietrich F.S."/>
            <person name="Fisk D.G."/>
            <person name="Binkley G."/>
            <person name="Balakrishnan R."/>
            <person name="Costanzo M.C."/>
            <person name="Dwight S.S."/>
            <person name="Hitz B.C."/>
            <person name="Karra K."/>
            <person name="Nash R.S."/>
            <person name="Weng S."/>
            <person name="Wong E.D."/>
            <person name="Lloyd P."/>
            <person name="Skrzypek M.S."/>
            <person name="Miyasato S.R."/>
            <person name="Simison M."/>
            <person name="Cherry J.M."/>
        </authorList>
    </citation>
    <scope>GENOME REANNOTATION</scope>
    <source>
        <strain>ATCC 204508 / S288c</strain>
    </source>
</reference>
<reference key="3">
    <citation type="journal article" date="2007" name="Genome Res.">
        <title>Approaching a complete repository of sequence-verified protein-encoding clones for Saccharomyces cerevisiae.</title>
        <authorList>
            <person name="Hu Y."/>
            <person name="Rolfs A."/>
            <person name="Bhullar B."/>
            <person name="Murthy T.V.S."/>
            <person name="Zhu C."/>
            <person name="Berger M.F."/>
            <person name="Camargo A.A."/>
            <person name="Kelley F."/>
            <person name="McCarron S."/>
            <person name="Jepson D."/>
            <person name="Richardson A."/>
            <person name="Raphael J."/>
            <person name="Moreira D."/>
            <person name="Taycher E."/>
            <person name="Zuo D."/>
            <person name="Mohr S."/>
            <person name="Kane M.F."/>
            <person name="Williamson J."/>
            <person name="Simpson A.J.G."/>
            <person name="Bulyk M.L."/>
            <person name="Harlow E."/>
            <person name="Marsischky G."/>
            <person name="Kolodner R.D."/>
            <person name="LaBaer J."/>
        </authorList>
    </citation>
    <scope>NUCLEOTIDE SEQUENCE [GENOMIC DNA]</scope>
    <source>
        <strain>ATCC 204508 / S288c</strain>
    </source>
</reference>
<dbReference type="EMBL" id="U18839">
    <property type="protein sequence ID" value="AAB64631.1"/>
    <property type="molecule type" value="Genomic_DNA"/>
</dbReference>
<dbReference type="EMBL" id="AY692587">
    <property type="protein sequence ID" value="AAT92606.1"/>
    <property type="molecule type" value="Genomic_DNA"/>
</dbReference>
<dbReference type="EMBL" id="BK006939">
    <property type="protein sequence ID" value="DAA07736.1"/>
    <property type="molecule type" value="Genomic_DNA"/>
</dbReference>
<dbReference type="PIR" id="S50579">
    <property type="entry name" value="S50579"/>
</dbReference>
<dbReference type="RefSeq" id="NP_010999.3">
    <property type="nucleotide sequence ID" value="NM_001178967.3"/>
</dbReference>
<dbReference type="BioGRID" id="36821">
    <property type="interactions" value="52"/>
</dbReference>
<dbReference type="DIP" id="DIP-3871N"/>
<dbReference type="FunCoup" id="P40049">
    <property type="interactions" value="20"/>
</dbReference>
<dbReference type="IntAct" id="P40049">
    <property type="interactions" value="2"/>
</dbReference>
<dbReference type="GlyGen" id="P40049">
    <property type="glycosylation" value="5 sites"/>
</dbReference>
<dbReference type="PaxDb" id="4932-YER076C"/>
<dbReference type="PeptideAtlas" id="P40049"/>
<dbReference type="EnsemblFungi" id="YER076C_mRNA">
    <property type="protein sequence ID" value="YER076C"/>
    <property type="gene ID" value="YER076C"/>
</dbReference>
<dbReference type="GeneID" id="856809"/>
<dbReference type="KEGG" id="sce:YER076C"/>
<dbReference type="AGR" id="SGD:S000000878"/>
<dbReference type="SGD" id="S000000878">
    <property type="gene designation" value="YER076C"/>
</dbReference>
<dbReference type="VEuPathDB" id="FungiDB:YER076C"/>
<dbReference type="eggNOG" id="ENOG502SBPD">
    <property type="taxonomic scope" value="Eukaryota"/>
</dbReference>
<dbReference type="HOGENOM" id="CLU_093262_0_0_1"/>
<dbReference type="InParanoid" id="P40049"/>
<dbReference type="OMA" id="ANDAWSH"/>
<dbReference type="OrthoDB" id="4039450at2759"/>
<dbReference type="BioCyc" id="YEAST:G3O-30247-MONOMER"/>
<dbReference type="BioGRID-ORCS" id="856809">
    <property type="hits" value="0 hits in 10 CRISPR screens"/>
</dbReference>
<dbReference type="PRO" id="PR:P40049"/>
<dbReference type="Proteomes" id="UP000002311">
    <property type="component" value="Chromosome V"/>
</dbReference>
<dbReference type="RNAct" id="P40049">
    <property type="molecule type" value="protein"/>
</dbReference>
<dbReference type="GO" id="GO:0005783">
    <property type="term" value="C:endoplasmic reticulum"/>
    <property type="evidence" value="ECO:0007005"/>
    <property type="project" value="SGD"/>
</dbReference>
<dbReference type="GO" id="GO:0005739">
    <property type="term" value="C:mitochondrion"/>
    <property type="evidence" value="ECO:0007005"/>
    <property type="project" value="SGD"/>
</dbReference>
<dbReference type="InterPro" id="IPR046624">
    <property type="entry name" value="CSS2_C"/>
</dbReference>
<dbReference type="Pfam" id="PF20521">
    <property type="entry name" value="DUF6736"/>
    <property type="match status" value="1"/>
</dbReference>
<proteinExistence type="inferred from homology"/>